<evidence type="ECO:0000250" key="1">
    <source>
        <dbReference type="UniProtKB" id="P60301"/>
    </source>
</evidence>
<evidence type="ECO:0000269" key="2">
    <source>
    </source>
</evidence>
<evidence type="ECO:0000269" key="3">
    <source>
    </source>
</evidence>
<evidence type="ECO:0000269" key="4">
    <source>
    </source>
</evidence>
<evidence type="ECO:0000269" key="5">
    <source>
    </source>
</evidence>
<evidence type="ECO:0000269" key="6">
    <source>
    </source>
</evidence>
<evidence type="ECO:0000269" key="7">
    <source>
    </source>
</evidence>
<evidence type="ECO:0000305" key="8"/>
<evidence type="ECO:0000312" key="9">
    <source>
        <dbReference type="PDB" id="1CB9"/>
    </source>
</evidence>
<evidence type="ECO:0000312" key="10">
    <source>
        <dbReference type="PDB" id="1CCQ"/>
    </source>
</evidence>
<evidence type="ECO:0000312" key="11">
    <source>
        <dbReference type="PDB" id="1FFJ"/>
    </source>
</evidence>
<evidence type="ECO:0007829" key="12">
    <source>
        <dbReference type="PDB" id="1CB9"/>
    </source>
</evidence>
<proteinExistence type="evidence at protein level"/>
<organism>
    <name type="scientific">Naja oxiana</name>
    <name type="common">Central Asian cobra</name>
    <name type="synonym">Oxus cobra</name>
    <dbReference type="NCBI Taxonomy" id="8657"/>
    <lineage>
        <taxon>Eukaryota</taxon>
        <taxon>Metazoa</taxon>
        <taxon>Chordata</taxon>
        <taxon>Craniata</taxon>
        <taxon>Vertebrata</taxon>
        <taxon>Euteleostomi</taxon>
        <taxon>Lepidosauria</taxon>
        <taxon>Squamata</taxon>
        <taxon>Bifurcata</taxon>
        <taxon>Unidentata</taxon>
        <taxon>Episquamata</taxon>
        <taxon>Toxicofera</taxon>
        <taxon>Serpentes</taxon>
        <taxon>Colubroidea</taxon>
        <taxon>Elapidae</taxon>
        <taxon>Elapinae</taxon>
        <taxon>Naja</taxon>
    </lineage>
</organism>
<reference key="1">
    <citation type="journal article" date="1974" name="FEBS Lett.">
        <title>The isolation and sequence determination of a cytotoxin from the venom of the Middle-Asian cobra Naja naja oxiana.</title>
        <authorList>
            <person name="Grishin E.V."/>
            <person name="Sukhikh A.P."/>
            <person name="Adamovich T.B."/>
            <person name="Ovchinnikov Y.A."/>
            <person name="Yukelson L.Y."/>
        </authorList>
    </citation>
    <scope>PROTEIN SEQUENCE</scope>
    <scope>SUBCELLULAR LOCATION</scope>
    <source>
        <tissue>Venom</tissue>
    </source>
</reference>
<reference key="2">
    <citation type="journal article" date="2001" name="Bioorg. Khim.">
        <title>ESR study of the interaction of cytotoxin II with model membranes.</title>
        <authorList>
            <person name="Dubinnyi M.A."/>
            <person name="Dubovskii P.V."/>
            <person name="Utkin Y.N."/>
            <person name="Simonova T.N."/>
            <person name="Barsukov L.I."/>
            <person name="Arseniev A.S."/>
        </authorList>
    </citation>
    <scope>FUNCTION</scope>
</reference>
<reference key="3">
    <citation type="journal article" date="2003" name="Eur. J. Biochem.">
        <title>Interaction of the P-type cardiotoxin with phospholipid membranes.</title>
        <authorList>
            <person name="Dubovskii P.V."/>
            <person name="Lesovoy D.M."/>
            <person name="Dubinnyi M.A."/>
            <person name="Utkin Y.N."/>
            <person name="Arseniev A.S."/>
        </authorList>
    </citation>
    <scope>FUNCTION</scope>
    <scope>INTERACTION WITH PHOSPHOLIPID MEMBRANES</scope>
</reference>
<reference key="4">
    <citation type="journal article" date="2005" name="Biochem. J.">
        <title>Interaction of three-finger toxins with phospholipid membranes: comparison of S- and P-type cytotoxins.</title>
        <authorList>
            <person name="Dubovskii P.V."/>
            <person name="Lesovoy D.M."/>
            <person name="Dubinnyi M.A."/>
            <person name="Konshina A.G."/>
            <person name="Utkin Y.N."/>
            <person name="Efremov R.G."/>
            <person name="Arseniev A.S."/>
        </authorList>
    </citation>
    <scope>FUNCTION</scope>
    <scope>APPARTENANCE TO P-TYPE CYTOTOXINS</scope>
</reference>
<reference key="5">
    <citation type="journal article" date="1999" name="Eur. J. Biochem.">
        <title>Two forms of cytotoxin II (cardiotoxin) from Naja naja oxiana in aqueous solution: spatial structures with tightly bound water molecules.</title>
        <authorList>
            <person name="Dementieva D.V."/>
            <person name="Bocharov E.V."/>
            <person name="Arseniev A.S."/>
        </authorList>
    </citation>
    <scope>STRUCTURE BY NMR</scope>
    <scope>DISULFIDE BONDS</scope>
</reference>
<reference key="6">
    <citation type="journal article" date="2001" name="J. Mol. Biol.">
        <title>Membrane binding motif of the P-type cardiotoxin.</title>
        <authorList>
            <person name="Dubovskii P.V."/>
            <person name="Dementieva D.V."/>
            <person name="Bocharov E.V."/>
            <person name="Utkin Y.N."/>
            <person name="Arseniev A.S."/>
        </authorList>
    </citation>
    <scope>STRUCTURE BY NMR</scope>
    <scope>DISULFIDE BONDS</scope>
</reference>
<dbReference type="PIR" id="A01709">
    <property type="entry name" value="H3NJ2R"/>
</dbReference>
<dbReference type="PDB" id="1CB9">
    <property type="method" value="NMR"/>
    <property type="chains" value="A=1-60"/>
</dbReference>
<dbReference type="PDB" id="1CCQ">
    <property type="method" value="NMR"/>
    <property type="chains" value="A=1-60"/>
</dbReference>
<dbReference type="PDB" id="1FFJ">
    <property type="method" value="NMR"/>
    <property type="chains" value="A=1-60"/>
</dbReference>
<dbReference type="PDBsum" id="1CB9"/>
<dbReference type="PDBsum" id="1CCQ"/>
<dbReference type="PDBsum" id="1FFJ"/>
<dbReference type="BMRB" id="P01441"/>
<dbReference type="SMR" id="P01441"/>
<dbReference type="EvolutionaryTrace" id="P01441"/>
<dbReference type="GO" id="GO:0005576">
    <property type="term" value="C:extracellular region"/>
    <property type="evidence" value="ECO:0007669"/>
    <property type="project" value="UniProtKB-SubCell"/>
</dbReference>
<dbReference type="GO" id="GO:0016020">
    <property type="term" value="C:membrane"/>
    <property type="evidence" value="ECO:0007669"/>
    <property type="project" value="UniProtKB-KW"/>
</dbReference>
<dbReference type="GO" id="GO:0044218">
    <property type="term" value="C:other organism cell membrane"/>
    <property type="evidence" value="ECO:0007669"/>
    <property type="project" value="UniProtKB-KW"/>
</dbReference>
<dbReference type="GO" id="GO:0090729">
    <property type="term" value="F:toxin activity"/>
    <property type="evidence" value="ECO:0007669"/>
    <property type="project" value="UniProtKB-KW"/>
</dbReference>
<dbReference type="GO" id="GO:0031640">
    <property type="term" value="P:killing of cells of another organism"/>
    <property type="evidence" value="ECO:0007669"/>
    <property type="project" value="UniProtKB-KW"/>
</dbReference>
<dbReference type="CDD" id="cd00206">
    <property type="entry name" value="TFP_snake_toxin"/>
    <property type="match status" value="1"/>
</dbReference>
<dbReference type="FunFam" id="2.10.60.10:FF:000024">
    <property type="entry name" value="Cytotoxin 1"/>
    <property type="match status" value="1"/>
</dbReference>
<dbReference type="Gene3D" id="2.10.60.10">
    <property type="entry name" value="CD59"/>
    <property type="match status" value="1"/>
</dbReference>
<dbReference type="InterPro" id="IPR003572">
    <property type="entry name" value="Cytotoxin_Cobra"/>
</dbReference>
<dbReference type="InterPro" id="IPR003571">
    <property type="entry name" value="Snake_3FTx"/>
</dbReference>
<dbReference type="InterPro" id="IPR045860">
    <property type="entry name" value="Snake_toxin-like_sf"/>
</dbReference>
<dbReference type="InterPro" id="IPR018354">
    <property type="entry name" value="Snake_toxin_con_site"/>
</dbReference>
<dbReference type="InterPro" id="IPR054131">
    <property type="entry name" value="Toxin_cobra-type"/>
</dbReference>
<dbReference type="Pfam" id="PF21947">
    <property type="entry name" value="Toxin_cobra-type"/>
    <property type="match status" value="1"/>
</dbReference>
<dbReference type="PRINTS" id="PR00282">
    <property type="entry name" value="CYTOTOXIN"/>
</dbReference>
<dbReference type="SUPFAM" id="SSF57302">
    <property type="entry name" value="Snake toxin-like"/>
    <property type="match status" value="1"/>
</dbReference>
<dbReference type="PROSITE" id="PS00272">
    <property type="entry name" value="SNAKE_TOXIN"/>
    <property type="match status" value="1"/>
</dbReference>
<sequence length="60" mass="6636">LKCKKLVPLFSKTCPAGKNLCYKMFMVAAPHVPVKRGCIDVCPKSSLLVKYVCCNTDKCN</sequence>
<protein>
    <recommendedName>
        <fullName>Cytotoxin 2</fullName>
    </recommendedName>
    <alternativeName>
        <fullName>Cytotoxin II</fullName>
        <shortName>CTII</shortName>
    </alternativeName>
</protein>
<comment type="function">
    <text evidence="4 5 6">This three-finger cytotoxin is a basic protein that interacts and penetrates into the cell membrane, with the tips of all the three loops. Cytotoxins which have a Pro-30 (P-type) interacts with membrane stronger that those which have a 'Ser-28' (S-type). CTII interacts with membrane stronger than CTI.</text>
</comment>
<comment type="subunit">
    <text evidence="1">Monomer in solution; Homodimer and oligomer in the presence of negatively charged lipids forming a pore with a size ranging between 20 and 30 Angstroms.</text>
</comment>
<comment type="subcellular location">
    <subcellularLocation>
        <location evidence="7">Secreted</location>
    </subcellularLocation>
    <subcellularLocation>
        <location evidence="1">Target cell membrane</location>
    </subcellularLocation>
</comment>
<comment type="tissue specificity">
    <text evidence="8">Expressed by the venom gland.</text>
</comment>
<comment type="miscellaneous">
    <text evidence="8">Is classified as a P-type cytotoxin, since a proline residue stands at position 30 (Pro-31 in standard classification).</text>
</comment>
<comment type="similarity">
    <text evidence="8">Belongs to the three-finger toxin family. Short-chain subfamily. Type IA cytotoxin sub-subfamily.</text>
</comment>
<name>3SA2_NAJOX</name>
<feature type="chain" id="PRO_0000093517" description="Cytotoxin 2" evidence="7">
    <location>
        <begin position="1"/>
        <end position="60"/>
    </location>
</feature>
<feature type="disulfide bond" evidence="2 3 9 10 11">
    <location>
        <begin position="3"/>
        <end position="21"/>
    </location>
</feature>
<feature type="disulfide bond" evidence="2 3 9 10 11">
    <location>
        <begin position="14"/>
        <end position="38"/>
    </location>
</feature>
<feature type="disulfide bond" evidence="2 3 9 10 11">
    <location>
        <begin position="42"/>
        <end position="53"/>
    </location>
</feature>
<feature type="disulfide bond" evidence="2 3 9 10 11">
    <location>
        <begin position="54"/>
        <end position="59"/>
    </location>
</feature>
<feature type="strand" evidence="12">
    <location>
        <begin position="2"/>
        <end position="4"/>
    </location>
</feature>
<feature type="strand" evidence="12">
    <location>
        <begin position="11"/>
        <end position="13"/>
    </location>
</feature>
<feature type="strand" evidence="12">
    <location>
        <begin position="20"/>
        <end position="26"/>
    </location>
</feature>
<feature type="strand" evidence="12">
    <location>
        <begin position="33"/>
        <end position="41"/>
    </location>
</feature>
<feature type="strand" evidence="12">
    <location>
        <begin position="47"/>
        <end position="56"/>
    </location>
</feature>
<keyword id="KW-0002">3D-structure</keyword>
<keyword id="KW-0123">Cardiotoxin</keyword>
<keyword id="KW-0204">Cytolysis</keyword>
<keyword id="KW-0903">Direct protein sequencing</keyword>
<keyword id="KW-1015">Disulfide bond</keyword>
<keyword id="KW-0472">Membrane</keyword>
<keyword id="KW-0964">Secreted</keyword>
<keyword id="KW-1052">Target cell membrane</keyword>
<keyword id="KW-1053">Target membrane</keyword>
<keyword id="KW-0800">Toxin</keyword>
<accession>P01441</accession>